<evidence type="ECO:0000255" key="1">
    <source>
        <dbReference type="HAMAP-Rule" id="MF_00184"/>
    </source>
</evidence>
<evidence type="ECO:0000255" key="2">
    <source>
        <dbReference type="PROSITE-ProRule" id="PRU01228"/>
    </source>
</evidence>
<sequence length="648" mass="73747">MTEINIEFPDGSVKPFEQGVSILDIAKSISTSLAKKAVAGKINGALVRLDQAINENVKIEIVTKDSEDGNIVNWNSAALVLTSAIESIYPGVHFGEIGNGEHGFYVDTDKVDQQISVDQLPAIEDKMKDIIKSKISLKHSEISVEEALASVDGDPYQAKIVKRNEKNGKVSVYDVDGKIIVSDNVALLSTSDMKAVKLLSVAGAYWEGKSSNPMLQRIYGTSFYKQKDLEAELERQKEAHERDHRVIGNNLDLFFVDPKVGAGLPYWMPNGATIRRSIERYIIDKEVKHGYQHVYTPVLMNLDAYKTSGHWQHYREDMFPPMDMGDGEMLELRPMNCPSHIQVYKHHIRSYRELPIRIAELGMMHRYEKSGALSGLQRVREMTLNDGHTFVAPDQIQAEFKKVLQLMVEVYRDFNITDYTFRLSYRDPANTEKYFDDDEMWNKSQSMLKAAMDDLGLDYVEAEGEAAFYGPKLDVQTKTALGNEETLSTIQLDFMLPKQFDLHYVGADGEEHRPVMIHRGLVSTMERFTAYLIEMYKGAFPTWLAPKQVTIIPVKDDLHGAYADKLREEMVDKDIRVEVDHRNEKMGYKIREAQTQKIPYILVVGDNELENNSVSVRHYGEDDSKNEASADFINNIVREIESYSREND</sequence>
<protein>
    <recommendedName>
        <fullName evidence="1">Threonine--tRNA ligase</fullName>
        <ecNumber evidence="1">6.1.1.3</ecNumber>
    </recommendedName>
    <alternativeName>
        <fullName evidence="1">Threonyl-tRNA synthetase</fullName>
        <shortName evidence="1">ThrRS</shortName>
    </alternativeName>
</protein>
<feature type="chain" id="PRO_1000020457" description="Threonine--tRNA ligase">
    <location>
        <begin position="1"/>
        <end position="648"/>
    </location>
</feature>
<feature type="domain" description="TGS" evidence="2">
    <location>
        <begin position="1"/>
        <end position="63"/>
    </location>
</feature>
<feature type="region of interest" description="Catalytic" evidence="1">
    <location>
        <begin position="243"/>
        <end position="541"/>
    </location>
</feature>
<feature type="binding site" evidence="1">
    <location>
        <position position="337"/>
    </location>
    <ligand>
        <name>Zn(2+)</name>
        <dbReference type="ChEBI" id="CHEBI:29105"/>
    </ligand>
</feature>
<feature type="binding site" evidence="1">
    <location>
        <position position="388"/>
    </location>
    <ligand>
        <name>Zn(2+)</name>
        <dbReference type="ChEBI" id="CHEBI:29105"/>
    </ligand>
</feature>
<feature type="binding site" evidence="1">
    <location>
        <position position="518"/>
    </location>
    <ligand>
        <name>Zn(2+)</name>
        <dbReference type="ChEBI" id="CHEBI:29105"/>
    </ligand>
</feature>
<name>SYT_PEDPA</name>
<proteinExistence type="inferred from homology"/>
<gene>
    <name evidence="1" type="primary">thrS</name>
    <name type="ordered locus">PEPE_0694</name>
</gene>
<comment type="function">
    <text evidence="1">Catalyzes the attachment of threonine to tRNA(Thr) in a two-step reaction: L-threonine is first activated by ATP to form Thr-AMP and then transferred to the acceptor end of tRNA(Thr). Also edits incorrectly charged L-seryl-tRNA(Thr).</text>
</comment>
<comment type="catalytic activity">
    <reaction evidence="1">
        <text>tRNA(Thr) + L-threonine + ATP = L-threonyl-tRNA(Thr) + AMP + diphosphate + H(+)</text>
        <dbReference type="Rhea" id="RHEA:24624"/>
        <dbReference type="Rhea" id="RHEA-COMP:9670"/>
        <dbReference type="Rhea" id="RHEA-COMP:9704"/>
        <dbReference type="ChEBI" id="CHEBI:15378"/>
        <dbReference type="ChEBI" id="CHEBI:30616"/>
        <dbReference type="ChEBI" id="CHEBI:33019"/>
        <dbReference type="ChEBI" id="CHEBI:57926"/>
        <dbReference type="ChEBI" id="CHEBI:78442"/>
        <dbReference type="ChEBI" id="CHEBI:78534"/>
        <dbReference type="ChEBI" id="CHEBI:456215"/>
        <dbReference type="EC" id="6.1.1.3"/>
    </reaction>
</comment>
<comment type="cofactor">
    <cofactor evidence="1">
        <name>Zn(2+)</name>
        <dbReference type="ChEBI" id="CHEBI:29105"/>
    </cofactor>
    <text evidence="1">Binds 1 zinc ion per subunit.</text>
</comment>
<comment type="subunit">
    <text evidence="1">Homodimer.</text>
</comment>
<comment type="subcellular location">
    <subcellularLocation>
        <location evidence="1">Cytoplasm</location>
    </subcellularLocation>
</comment>
<comment type="similarity">
    <text evidence="1">Belongs to the class-II aminoacyl-tRNA synthetase family.</text>
</comment>
<accession>Q03GB7</accession>
<dbReference type="EC" id="6.1.1.3" evidence="1"/>
<dbReference type="EMBL" id="CP000422">
    <property type="protein sequence ID" value="ABJ67755.1"/>
    <property type="molecule type" value="Genomic_DNA"/>
</dbReference>
<dbReference type="RefSeq" id="WP_002833794.1">
    <property type="nucleotide sequence ID" value="NC_008525.1"/>
</dbReference>
<dbReference type="SMR" id="Q03GB7"/>
<dbReference type="STRING" id="278197.PEPE_0694"/>
<dbReference type="GeneID" id="33061494"/>
<dbReference type="KEGG" id="ppe:PEPE_0694"/>
<dbReference type="eggNOG" id="COG0441">
    <property type="taxonomic scope" value="Bacteria"/>
</dbReference>
<dbReference type="HOGENOM" id="CLU_008554_0_1_9"/>
<dbReference type="OrthoDB" id="9802304at2"/>
<dbReference type="Proteomes" id="UP000000773">
    <property type="component" value="Chromosome"/>
</dbReference>
<dbReference type="GO" id="GO:0005737">
    <property type="term" value="C:cytoplasm"/>
    <property type="evidence" value="ECO:0007669"/>
    <property type="project" value="UniProtKB-SubCell"/>
</dbReference>
<dbReference type="GO" id="GO:0005524">
    <property type="term" value="F:ATP binding"/>
    <property type="evidence" value="ECO:0007669"/>
    <property type="project" value="UniProtKB-UniRule"/>
</dbReference>
<dbReference type="GO" id="GO:0140096">
    <property type="term" value="F:catalytic activity, acting on a protein"/>
    <property type="evidence" value="ECO:0007669"/>
    <property type="project" value="UniProtKB-ARBA"/>
</dbReference>
<dbReference type="GO" id="GO:0046872">
    <property type="term" value="F:metal ion binding"/>
    <property type="evidence" value="ECO:0007669"/>
    <property type="project" value="UniProtKB-KW"/>
</dbReference>
<dbReference type="GO" id="GO:0004829">
    <property type="term" value="F:threonine-tRNA ligase activity"/>
    <property type="evidence" value="ECO:0007669"/>
    <property type="project" value="UniProtKB-UniRule"/>
</dbReference>
<dbReference type="GO" id="GO:0016740">
    <property type="term" value="F:transferase activity"/>
    <property type="evidence" value="ECO:0007669"/>
    <property type="project" value="UniProtKB-ARBA"/>
</dbReference>
<dbReference type="GO" id="GO:0000049">
    <property type="term" value="F:tRNA binding"/>
    <property type="evidence" value="ECO:0007669"/>
    <property type="project" value="UniProtKB-KW"/>
</dbReference>
<dbReference type="GO" id="GO:0006435">
    <property type="term" value="P:threonyl-tRNA aminoacylation"/>
    <property type="evidence" value="ECO:0007669"/>
    <property type="project" value="UniProtKB-UniRule"/>
</dbReference>
<dbReference type="CDD" id="cd01667">
    <property type="entry name" value="TGS_ThrRS"/>
    <property type="match status" value="1"/>
</dbReference>
<dbReference type="CDD" id="cd00860">
    <property type="entry name" value="ThrRS_anticodon"/>
    <property type="match status" value="1"/>
</dbReference>
<dbReference type="CDD" id="cd00771">
    <property type="entry name" value="ThrRS_core"/>
    <property type="match status" value="1"/>
</dbReference>
<dbReference type="FunFam" id="3.10.20.30:FF:000005">
    <property type="entry name" value="Threonine--tRNA ligase"/>
    <property type="match status" value="1"/>
</dbReference>
<dbReference type="FunFam" id="3.30.930.10:FF:000002">
    <property type="entry name" value="Threonine--tRNA ligase"/>
    <property type="match status" value="1"/>
</dbReference>
<dbReference type="FunFam" id="3.40.50.800:FF:000001">
    <property type="entry name" value="Threonine--tRNA ligase"/>
    <property type="match status" value="1"/>
</dbReference>
<dbReference type="Gene3D" id="3.10.20.30">
    <property type="match status" value="1"/>
</dbReference>
<dbReference type="Gene3D" id="3.30.54.20">
    <property type="match status" value="1"/>
</dbReference>
<dbReference type="Gene3D" id="3.40.50.800">
    <property type="entry name" value="Anticodon-binding domain"/>
    <property type="match status" value="1"/>
</dbReference>
<dbReference type="Gene3D" id="3.30.930.10">
    <property type="entry name" value="Bira Bifunctional Protein, Domain 2"/>
    <property type="match status" value="1"/>
</dbReference>
<dbReference type="Gene3D" id="3.30.980.10">
    <property type="entry name" value="Threonyl-trna Synthetase, Chain A, domain 2"/>
    <property type="match status" value="1"/>
</dbReference>
<dbReference type="HAMAP" id="MF_00184">
    <property type="entry name" value="Thr_tRNA_synth"/>
    <property type="match status" value="1"/>
</dbReference>
<dbReference type="InterPro" id="IPR002314">
    <property type="entry name" value="aa-tRNA-synt_IIb"/>
</dbReference>
<dbReference type="InterPro" id="IPR006195">
    <property type="entry name" value="aa-tRNA-synth_II"/>
</dbReference>
<dbReference type="InterPro" id="IPR045864">
    <property type="entry name" value="aa-tRNA-synth_II/BPL/LPL"/>
</dbReference>
<dbReference type="InterPro" id="IPR004154">
    <property type="entry name" value="Anticodon-bd"/>
</dbReference>
<dbReference type="InterPro" id="IPR036621">
    <property type="entry name" value="Anticodon-bd_dom_sf"/>
</dbReference>
<dbReference type="InterPro" id="IPR012675">
    <property type="entry name" value="Beta-grasp_dom_sf"/>
</dbReference>
<dbReference type="InterPro" id="IPR004095">
    <property type="entry name" value="TGS"/>
</dbReference>
<dbReference type="InterPro" id="IPR012676">
    <property type="entry name" value="TGS-like"/>
</dbReference>
<dbReference type="InterPro" id="IPR002320">
    <property type="entry name" value="Thr-tRNA-ligase_IIa"/>
</dbReference>
<dbReference type="InterPro" id="IPR018163">
    <property type="entry name" value="Thr/Ala-tRNA-synth_IIc_edit"/>
</dbReference>
<dbReference type="InterPro" id="IPR047246">
    <property type="entry name" value="ThrRS_anticodon"/>
</dbReference>
<dbReference type="InterPro" id="IPR033728">
    <property type="entry name" value="ThrRS_core"/>
</dbReference>
<dbReference type="InterPro" id="IPR012947">
    <property type="entry name" value="tRNA_SAD"/>
</dbReference>
<dbReference type="NCBIfam" id="TIGR00418">
    <property type="entry name" value="thrS"/>
    <property type="match status" value="1"/>
</dbReference>
<dbReference type="PANTHER" id="PTHR11451:SF56">
    <property type="entry name" value="THREONINE--TRNA LIGASE 1"/>
    <property type="match status" value="1"/>
</dbReference>
<dbReference type="PANTHER" id="PTHR11451">
    <property type="entry name" value="THREONINE-TRNA LIGASE"/>
    <property type="match status" value="1"/>
</dbReference>
<dbReference type="Pfam" id="PF03129">
    <property type="entry name" value="HGTP_anticodon"/>
    <property type="match status" value="1"/>
</dbReference>
<dbReference type="Pfam" id="PF02824">
    <property type="entry name" value="TGS"/>
    <property type="match status" value="1"/>
</dbReference>
<dbReference type="Pfam" id="PF00587">
    <property type="entry name" value="tRNA-synt_2b"/>
    <property type="match status" value="1"/>
</dbReference>
<dbReference type="PRINTS" id="PR01047">
    <property type="entry name" value="TRNASYNTHTHR"/>
</dbReference>
<dbReference type="SMART" id="SM00863">
    <property type="entry name" value="tRNA_SAD"/>
    <property type="match status" value="1"/>
</dbReference>
<dbReference type="SUPFAM" id="SSF52954">
    <property type="entry name" value="Class II aaRS ABD-related"/>
    <property type="match status" value="1"/>
</dbReference>
<dbReference type="SUPFAM" id="SSF55681">
    <property type="entry name" value="Class II aaRS and biotin synthetases"/>
    <property type="match status" value="1"/>
</dbReference>
<dbReference type="SUPFAM" id="SSF81271">
    <property type="entry name" value="TGS-like"/>
    <property type="match status" value="1"/>
</dbReference>
<dbReference type="SUPFAM" id="SSF55186">
    <property type="entry name" value="ThrRS/AlaRS common domain"/>
    <property type="match status" value="1"/>
</dbReference>
<dbReference type="PROSITE" id="PS50862">
    <property type="entry name" value="AA_TRNA_LIGASE_II"/>
    <property type="match status" value="1"/>
</dbReference>
<dbReference type="PROSITE" id="PS51880">
    <property type="entry name" value="TGS"/>
    <property type="match status" value="1"/>
</dbReference>
<reference key="1">
    <citation type="journal article" date="2006" name="Proc. Natl. Acad. Sci. U.S.A.">
        <title>Comparative genomics of the lactic acid bacteria.</title>
        <authorList>
            <person name="Makarova K.S."/>
            <person name="Slesarev A."/>
            <person name="Wolf Y.I."/>
            <person name="Sorokin A."/>
            <person name="Mirkin B."/>
            <person name="Koonin E.V."/>
            <person name="Pavlov A."/>
            <person name="Pavlova N."/>
            <person name="Karamychev V."/>
            <person name="Polouchine N."/>
            <person name="Shakhova V."/>
            <person name="Grigoriev I."/>
            <person name="Lou Y."/>
            <person name="Rohksar D."/>
            <person name="Lucas S."/>
            <person name="Huang K."/>
            <person name="Goodstein D.M."/>
            <person name="Hawkins T."/>
            <person name="Plengvidhya V."/>
            <person name="Welker D."/>
            <person name="Hughes J."/>
            <person name="Goh Y."/>
            <person name="Benson A."/>
            <person name="Baldwin K."/>
            <person name="Lee J.-H."/>
            <person name="Diaz-Muniz I."/>
            <person name="Dosti B."/>
            <person name="Smeianov V."/>
            <person name="Wechter W."/>
            <person name="Barabote R."/>
            <person name="Lorca G."/>
            <person name="Altermann E."/>
            <person name="Barrangou R."/>
            <person name="Ganesan B."/>
            <person name="Xie Y."/>
            <person name="Rawsthorne H."/>
            <person name="Tamir D."/>
            <person name="Parker C."/>
            <person name="Breidt F."/>
            <person name="Broadbent J.R."/>
            <person name="Hutkins R."/>
            <person name="O'Sullivan D."/>
            <person name="Steele J."/>
            <person name="Unlu G."/>
            <person name="Saier M.H. Jr."/>
            <person name="Klaenhammer T."/>
            <person name="Richardson P."/>
            <person name="Kozyavkin S."/>
            <person name="Weimer B.C."/>
            <person name="Mills D.A."/>
        </authorList>
    </citation>
    <scope>NUCLEOTIDE SEQUENCE [LARGE SCALE GENOMIC DNA]</scope>
    <source>
        <strain>ATCC 25745 / CCUG 21536 / LMG 10740 / 183-1w</strain>
    </source>
</reference>
<keyword id="KW-0030">Aminoacyl-tRNA synthetase</keyword>
<keyword id="KW-0067">ATP-binding</keyword>
<keyword id="KW-0963">Cytoplasm</keyword>
<keyword id="KW-0436">Ligase</keyword>
<keyword id="KW-0479">Metal-binding</keyword>
<keyword id="KW-0547">Nucleotide-binding</keyword>
<keyword id="KW-0648">Protein biosynthesis</keyword>
<keyword id="KW-0694">RNA-binding</keyword>
<keyword id="KW-0820">tRNA-binding</keyword>
<keyword id="KW-0862">Zinc</keyword>
<organism>
    <name type="scientific">Pediococcus pentosaceus (strain ATCC 25745 / CCUG 21536 / LMG 10740 / 183-1w)</name>
    <dbReference type="NCBI Taxonomy" id="278197"/>
    <lineage>
        <taxon>Bacteria</taxon>
        <taxon>Bacillati</taxon>
        <taxon>Bacillota</taxon>
        <taxon>Bacilli</taxon>
        <taxon>Lactobacillales</taxon>
        <taxon>Lactobacillaceae</taxon>
        <taxon>Pediococcus</taxon>
    </lineage>
</organism>